<dbReference type="EMBL" id="AF063231">
    <property type="protein sequence ID" value="AAC33446.1"/>
    <property type="molecule type" value="mRNA"/>
</dbReference>
<dbReference type="EMBL" id="AK088015">
    <property type="protein sequence ID" value="BAC40097.1"/>
    <property type="molecule type" value="mRNA"/>
</dbReference>
<dbReference type="EMBL" id="AK164437">
    <property type="protein sequence ID" value="BAE37788.1"/>
    <property type="molecule type" value="mRNA"/>
</dbReference>
<dbReference type="EMBL" id="AK168730">
    <property type="protein sequence ID" value="BAE40571.1"/>
    <property type="molecule type" value="mRNA"/>
</dbReference>
<dbReference type="CCDS" id="CCDS16112.1"/>
<dbReference type="RefSeq" id="NP_001185805.1">
    <property type="nucleotide sequence ID" value="NM_001198876.1"/>
</dbReference>
<dbReference type="RefSeq" id="NP_001185806.1">
    <property type="nucleotide sequence ID" value="NM_001198877.1"/>
</dbReference>
<dbReference type="RefSeq" id="NP_001185807.1">
    <property type="nucleotide sequence ID" value="NM_001198878.1"/>
</dbReference>
<dbReference type="RefSeq" id="NP_034194.1">
    <property type="nucleotide sequence ID" value="NM_010064.4"/>
</dbReference>
<dbReference type="SMR" id="O88487"/>
<dbReference type="BioGRID" id="199256">
    <property type="interactions" value="35"/>
</dbReference>
<dbReference type="ComplexPortal" id="CPX-5699">
    <property type="entry name" value="Cytoplasmic dynein complex, variant 1"/>
</dbReference>
<dbReference type="FunCoup" id="O88487">
    <property type="interactions" value="2792"/>
</dbReference>
<dbReference type="IntAct" id="O88487">
    <property type="interactions" value="10"/>
</dbReference>
<dbReference type="STRING" id="10090.ENSMUSP00000107768"/>
<dbReference type="GlyGen" id="O88487">
    <property type="glycosylation" value="1 site, 1 O-linked glycan (1 site)"/>
</dbReference>
<dbReference type="iPTMnet" id="O88487"/>
<dbReference type="PhosphoSitePlus" id="O88487"/>
<dbReference type="SwissPalm" id="O88487"/>
<dbReference type="REPRODUCTION-2DPAGE" id="O88487"/>
<dbReference type="jPOST" id="O88487"/>
<dbReference type="PaxDb" id="10090-ENSMUSP00000080410"/>
<dbReference type="ProteomicsDB" id="279829"/>
<dbReference type="Pumba" id="O88487"/>
<dbReference type="Antibodypedia" id="33847">
    <property type="antibodies" value="145 antibodies from 30 providers"/>
</dbReference>
<dbReference type="DNASU" id="13427"/>
<dbReference type="Ensembl" id="ENSMUST00000081710.12">
    <property type="protein sequence ID" value="ENSMUSP00000080410.6"/>
    <property type="gene ID" value="ENSMUSG00000027012.16"/>
</dbReference>
<dbReference type="Ensembl" id="ENSMUST00000112138.8">
    <property type="protein sequence ID" value="ENSMUSP00000107766.2"/>
    <property type="gene ID" value="ENSMUSG00000027012.16"/>
</dbReference>
<dbReference type="GeneID" id="13427"/>
<dbReference type="KEGG" id="mmu:13427"/>
<dbReference type="UCSC" id="uc008kai.2">
    <property type="organism name" value="mouse"/>
</dbReference>
<dbReference type="AGR" id="MGI:107750"/>
<dbReference type="CTD" id="1781"/>
<dbReference type="MGI" id="MGI:107750">
    <property type="gene designation" value="Dync1i2"/>
</dbReference>
<dbReference type="VEuPathDB" id="HostDB:ENSMUSG00000027012"/>
<dbReference type="eggNOG" id="KOG1587">
    <property type="taxonomic scope" value="Eukaryota"/>
</dbReference>
<dbReference type="GeneTree" id="ENSGT00940000155442"/>
<dbReference type="InParanoid" id="O88487"/>
<dbReference type="OMA" id="MHDRPEY"/>
<dbReference type="OrthoDB" id="4189at2759"/>
<dbReference type="TreeFam" id="TF300553"/>
<dbReference type="Reactome" id="R-MMU-141444">
    <property type="pathway name" value="Amplification of signal from unattached kinetochores via a MAD2 inhibitory signal"/>
</dbReference>
<dbReference type="Reactome" id="R-MMU-2132295">
    <property type="pathway name" value="MHC class II antigen presentation"/>
</dbReference>
<dbReference type="Reactome" id="R-MMU-2467813">
    <property type="pathway name" value="Separation of Sister Chromatids"/>
</dbReference>
<dbReference type="Reactome" id="R-MMU-2500257">
    <property type="pathway name" value="Resolution of Sister Chromatid Cohesion"/>
</dbReference>
<dbReference type="Reactome" id="R-MMU-2565942">
    <property type="pathway name" value="Regulation of PLK1 Activity at G2/M Transition"/>
</dbReference>
<dbReference type="Reactome" id="R-MMU-3371497">
    <property type="pathway name" value="HSP90 chaperone cycle for steroid hormone receptors (SHR) in the presence of ligand"/>
</dbReference>
<dbReference type="Reactome" id="R-MMU-380259">
    <property type="pathway name" value="Loss of Nlp from mitotic centrosomes"/>
</dbReference>
<dbReference type="Reactome" id="R-MMU-380270">
    <property type="pathway name" value="Recruitment of mitotic centrosome proteins and complexes"/>
</dbReference>
<dbReference type="Reactome" id="R-MMU-380284">
    <property type="pathway name" value="Loss of proteins required for interphase microtubule organization from the centrosome"/>
</dbReference>
<dbReference type="Reactome" id="R-MMU-380320">
    <property type="pathway name" value="Recruitment of NuMA to mitotic centrosomes"/>
</dbReference>
<dbReference type="Reactome" id="R-MMU-5620912">
    <property type="pathway name" value="Anchoring of the basal body to the plasma membrane"/>
</dbReference>
<dbReference type="Reactome" id="R-MMU-5663220">
    <property type="pathway name" value="RHO GTPases Activate Formins"/>
</dbReference>
<dbReference type="Reactome" id="R-MMU-6807878">
    <property type="pathway name" value="COPI-mediated anterograde transport"/>
</dbReference>
<dbReference type="Reactome" id="R-MMU-6811436">
    <property type="pathway name" value="COPI-independent Golgi-to-ER retrograde traffic"/>
</dbReference>
<dbReference type="Reactome" id="R-MMU-68877">
    <property type="pathway name" value="Mitotic Prometaphase"/>
</dbReference>
<dbReference type="Reactome" id="R-MMU-8854518">
    <property type="pathway name" value="AURKA Activation by TPX2"/>
</dbReference>
<dbReference type="Reactome" id="R-MMU-9646399">
    <property type="pathway name" value="Aggrephagy"/>
</dbReference>
<dbReference type="Reactome" id="R-MMU-9648025">
    <property type="pathway name" value="EML4 and NUDC in mitotic spindle formation"/>
</dbReference>
<dbReference type="BioGRID-ORCS" id="13427">
    <property type="hits" value="22 hits in 79 CRISPR screens"/>
</dbReference>
<dbReference type="CD-CODE" id="CE726F99">
    <property type="entry name" value="Postsynaptic density"/>
</dbReference>
<dbReference type="ChiTaRS" id="Dync1i2">
    <property type="organism name" value="mouse"/>
</dbReference>
<dbReference type="PRO" id="PR:O88487"/>
<dbReference type="Proteomes" id="UP000000589">
    <property type="component" value="Chromosome 2"/>
</dbReference>
<dbReference type="RNAct" id="O88487">
    <property type="molecule type" value="protein"/>
</dbReference>
<dbReference type="Bgee" id="ENSMUSG00000027012">
    <property type="expression patterns" value="Expressed in cortical plate and 288 other cell types or tissues"/>
</dbReference>
<dbReference type="ExpressionAtlas" id="O88487">
    <property type="expression patterns" value="baseline and differential"/>
</dbReference>
<dbReference type="GO" id="GO:0005868">
    <property type="term" value="C:cytoplasmic dynein complex"/>
    <property type="evidence" value="ECO:0007669"/>
    <property type="project" value="InterPro"/>
</dbReference>
<dbReference type="GO" id="GO:0030286">
    <property type="term" value="C:dynein complex"/>
    <property type="evidence" value="ECO:0000266"/>
    <property type="project" value="ComplexPortal"/>
</dbReference>
<dbReference type="GO" id="GO:0005874">
    <property type="term" value="C:microtubule"/>
    <property type="evidence" value="ECO:0007669"/>
    <property type="project" value="UniProtKB-KW"/>
</dbReference>
<dbReference type="GO" id="GO:0036157">
    <property type="term" value="C:outer dynein arm"/>
    <property type="evidence" value="ECO:0000314"/>
    <property type="project" value="MGI"/>
</dbReference>
<dbReference type="GO" id="GO:0031982">
    <property type="term" value="C:vesicle"/>
    <property type="evidence" value="ECO:0000250"/>
    <property type="project" value="UniProtKB"/>
</dbReference>
<dbReference type="GO" id="GO:0007018">
    <property type="term" value="P:microtubule-based movement"/>
    <property type="evidence" value="ECO:0007669"/>
    <property type="project" value="InterPro"/>
</dbReference>
<dbReference type="FunFam" id="2.130.10.10:FF:000095">
    <property type="entry name" value="Cytoplasmic dynein 1 intermediate chain 2"/>
    <property type="match status" value="1"/>
</dbReference>
<dbReference type="FunFam" id="2.130.10.10:FF:000026">
    <property type="entry name" value="cytoplasmic dynein 1 intermediate chain 2 isoform X2"/>
    <property type="match status" value="1"/>
</dbReference>
<dbReference type="Gene3D" id="2.130.10.10">
    <property type="entry name" value="YVTN repeat-like/Quinoprotein amine dehydrogenase"/>
    <property type="match status" value="2"/>
</dbReference>
<dbReference type="InterPro" id="IPR025956">
    <property type="entry name" value="DYNC1I1/DYNC1I2"/>
</dbReference>
<dbReference type="InterPro" id="IPR050687">
    <property type="entry name" value="Dynein_IC"/>
</dbReference>
<dbReference type="InterPro" id="IPR015943">
    <property type="entry name" value="WD40/YVTN_repeat-like_dom_sf"/>
</dbReference>
<dbReference type="InterPro" id="IPR036322">
    <property type="entry name" value="WD40_repeat_dom_sf"/>
</dbReference>
<dbReference type="InterPro" id="IPR001680">
    <property type="entry name" value="WD40_rpt"/>
</dbReference>
<dbReference type="PANTHER" id="PTHR12442:SF37">
    <property type="entry name" value="CYTOPLASMIC DYNEIN 1 INTERMEDIATE CHAIN 2"/>
    <property type="match status" value="1"/>
</dbReference>
<dbReference type="PANTHER" id="PTHR12442">
    <property type="entry name" value="DYNEIN INTERMEDIATE CHAIN"/>
    <property type="match status" value="1"/>
</dbReference>
<dbReference type="Pfam" id="PF11540">
    <property type="entry name" value="Dynein_IC2"/>
    <property type="match status" value="1"/>
</dbReference>
<dbReference type="Pfam" id="PF00400">
    <property type="entry name" value="WD40"/>
    <property type="match status" value="1"/>
</dbReference>
<dbReference type="SMART" id="SM00320">
    <property type="entry name" value="WD40"/>
    <property type="match status" value="5"/>
</dbReference>
<dbReference type="SUPFAM" id="SSF50978">
    <property type="entry name" value="WD40 repeat-like"/>
    <property type="match status" value="1"/>
</dbReference>
<dbReference type="PROSITE" id="PS50294">
    <property type="entry name" value="WD_REPEATS_REGION"/>
    <property type="match status" value="1"/>
</dbReference>
<protein>
    <recommendedName>
        <fullName>Cytoplasmic dynein 1 intermediate chain 2</fullName>
    </recommendedName>
    <alternativeName>
        <fullName>Cytoplasmic dynein intermediate chain 2</fullName>
    </alternativeName>
    <alternativeName>
        <fullName>Dynein intermediate chain 2, cytosolic</fullName>
        <shortName>DH IC-2</shortName>
    </alternativeName>
</protein>
<gene>
    <name type="primary">Dync1i2</name>
    <name type="synonym">Dnci2</name>
    <name type="synonym">Dncic2</name>
</gene>
<comment type="function">
    <text evidence="2 5">Acts as one of several non-catalytic accessory components of the cytoplasmic dynein 1 complex that are thought to be involved in linking dynein to cargos and to adapter proteins that regulate dynein function (By similarity). Cytoplasmic dynein 1 acts as a motor for the intracellular retrograde motility of vesicles and organelles along microtubules (By similarity). The intermediate chains mediate the binding of dynein to dynactin via its 150 kDa component (p150-glued) DCTN1 (PubMed:27474409). Involved in membrane-transport, such as Golgi apparatus, late endosomes and lysosomes (PubMed:27474409).</text>
</comment>
<comment type="subunit">
    <text evidence="2 4 5 6 7">Homodimer (By similarity). The cytoplasmic dynein 1 complex consists of two catalytic heavy chains (HCs) and a number of non-catalytic subunits presented by intermediate chains (ICs), light intermediate chains (LICs) and light chains (LCs); the composition seems to vary in respect to the IC, LIC and LC composition (By similarity). The heavy chain homodimer serves as a scaffold for the probable homodimeric assembly of the respective non-catalytic subunits (By similarity). The ICs and LICs bind directly to the HC dimer and the LCs assemble on the IC dimer (By similarity). Interacts with DYNLT3 (By similarity). Interacts with DYNLT1 (By similarity). Interacts (dephosphorylated at Ser-84) with DCTN1 (PubMed:27474409). Interacts with BICD2 (PubMed:22956769). Interacts with SPEF2 (PubMed:28619825). Interacts with CFAP61 (PubMed:34792097).</text>
</comment>
<comment type="subcellular location">
    <subcellularLocation>
        <location evidence="6">Cytoplasm</location>
        <location evidence="6">Cytoskeleton</location>
    </subcellularLocation>
    <subcellularLocation>
        <location evidence="6">Cytoplasm</location>
    </subcellularLocation>
    <text evidence="6">Detected in the cytoplasm of pachytene spermatocytes. Localizes to the manchette in elongating spermatids.</text>
</comment>
<comment type="PTM">
    <text evidence="2">The phosphorylation status of Ser-84 appears to be involved in dynactin-dependent target binding.</text>
</comment>
<comment type="PTM">
    <text evidence="5">Pyrophosphorylation by 5-diphosphoinositol pentakisphosphate (5-IP7) promotes interaction with DCTN1 (PubMed:27474409). Serine pyrophosphorylation is achieved by Mg(2+)-dependent, but enzyme independent transfer of a beta-phosphate from a inositol pyrophosphate to a pre-phosphorylated serine residue (PubMed:27474409).</text>
</comment>
<comment type="similarity">
    <text evidence="8">Belongs to the dynein intermediate chain family.</text>
</comment>
<organism>
    <name type="scientific">Mus musculus</name>
    <name type="common">Mouse</name>
    <dbReference type="NCBI Taxonomy" id="10090"/>
    <lineage>
        <taxon>Eukaryota</taxon>
        <taxon>Metazoa</taxon>
        <taxon>Chordata</taxon>
        <taxon>Craniata</taxon>
        <taxon>Vertebrata</taxon>
        <taxon>Euteleostomi</taxon>
        <taxon>Mammalia</taxon>
        <taxon>Eutheria</taxon>
        <taxon>Euarchontoglires</taxon>
        <taxon>Glires</taxon>
        <taxon>Rodentia</taxon>
        <taxon>Myomorpha</taxon>
        <taxon>Muroidea</taxon>
        <taxon>Muridae</taxon>
        <taxon>Murinae</taxon>
        <taxon>Mus</taxon>
        <taxon>Mus</taxon>
    </lineage>
</organism>
<reference key="1">
    <citation type="journal article" date="1999" name="Genomics">
        <title>Cloning and characterization of two cytoplasmic dynein intermediate chain genes in mouse and human.</title>
        <authorList>
            <person name="Crackower M.A."/>
            <person name="Sinasac D.S."/>
            <person name="Xia J."/>
            <person name="Motoyama J."/>
            <person name="Prochazka M."/>
            <person name="Rommens J.M."/>
            <person name="Scherer S.W."/>
            <person name="Tsui L.-C."/>
        </authorList>
    </citation>
    <scope>NUCLEOTIDE SEQUENCE [MRNA]</scope>
</reference>
<reference key="2">
    <citation type="journal article" date="2005" name="Science">
        <title>The transcriptional landscape of the mammalian genome.</title>
        <authorList>
            <person name="Carninci P."/>
            <person name="Kasukawa T."/>
            <person name="Katayama S."/>
            <person name="Gough J."/>
            <person name="Frith M.C."/>
            <person name="Maeda N."/>
            <person name="Oyama R."/>
            <person name="Ravasi T."/>
            <person name="Lenhard B."/>
            <person name="Wells C."/>
            <person name="Kodzius R."/>
            <person name="Shimokawa K."/>
            <person name="Bajic V.B."/>
            <person name="Brenner S.E."/>
            <person name="Batalov S."/>
            <person name="Forrest A.R."/>
            <person name="Zavolan M."/>
            <person name="Davis M.J."/>
            <person name="Wilming L.G."/>
            <person name="Aidinis V."/>
            <person name="Allen J.E."/>
            <person name="Ambesi-Impiombato A."/>
            <person name="Apweiler R."/>
            <person name="Aturaliya R.N."/>
            <person name="Bailey T.L."/>
            <person name="Bansal M."/>
            <person name="Baxter L."/>
            <person name="Beisel K.W."/>
            <person name="Bersano T."/>
            <person name="Bono H."/>
            <person name="Chalk A.M."/>
            <person name="Chiu K.P."/>
            <person name="Choudhary V."/>
            <person name="Christoffels A."/>
            <person name="Clutterbuck D.R."/>
            <person name="Crowe M.L."/>
            <person name="Dalla E."/>
            <person name="Dalrymple B.P."/>
            <person name="de Bono B."/>
            <person name="Della Gatta G."/>
            <person name="di Bernardo D."/>
            <person name="Down T."/>
            <person name="Engstrom P."/>
            <person name="Fagiolini M."/>
            <person name="Faulkner G."/>
            <person name="Fletcher C.F."/>
            <person name="Fukushima T."/>
            <person name="Furuno M."/>
            <person name="Futaki S."/>
            <person name="Gariboldi M."/>
            <person name="Georgii-Hemming P."/>
            <person name="Gingeras T.R."/>
            <person name="Gojobori T."/>
            <person name="Green R.E."/>
            <person name="Gustincich S."/>
            <person name="Harbers M."/>
            <person name="Hayashi Y."/>
            <person name="Hensch T.K."/>
            <person name="Hirokawa N."/>
            <person name="Hill D."/>
            <person name="Huminiecki L."/>
            <person name="Iacono M."/>
            <person name="Ikeo K."/>
            <person name="Iwama A."/>
            <person name="Ishikawa T."/>
            <person name="Jakt M."/>
            <person name="Kanapin A."/>
            <person name="Katoh M."/>
            <person name="Kawasawa Y."/>
            <person name="Kelso J."/>
            <person name="Kitamura H."/>
            <person name="Kitano H."/>
            <person name="Kollias G."/>
            <person name="Krishnan S.P."/>
            <person name="Kruger A."/>
            <person name="Kummerfeld S.K."/>
            <person name="Kurochkin I.V."/>
            <person name="Lareau L.F."/>
            <person name="Lazarevic D."/>
            <person name="Lipovich L."/>
            <person name="Liu J."/>
            <person name="Liuni S."/>
            <person name="McWilliam S."/>
            <person name="Madan Babu M."/>
            <person name="Madera M."/>
            <person name="Marchionni L."/>
            <person name="Matsuda H."/>
            <person name="Matsuzawa S."/>
            <person name="Miki H."/>
            <person name="Mignone F."/>
            <person name="Miyake S."/>
            <person name="Morris K."/>
            <person name="Mottagui-Tabar S."/>
            <person name="Mulder N."/>
            <person name="Nakano N."/>
            <person name="Nakauchi H."/>
            <person name="Ng P."/>
            <person name="Nilsson R."/>
            <person name="Nishiguchi S."/>
            <person name="Nishikawa S."/>
            <person name="Nori F."/>
            <person name="Ohara O."/>
            <person name="Okazaki Y."/>
            <person name="Orlando V."/>
            <person name="Pang K.C."/>
            <person name="Pavan W.J."/>
            <person name="Pavesi G."/>
            <person name="Pesole G."/>
            <person name="Petrovsky N."/>
            <person name="Piazza S."/>
            <person name="Reed J."/>
            <person name="Reid J.F."/>
            <person name="Ring B.Z."/>
            <person name="Ringwald M."/>
            <person name="Rost B."/>
            <person name="Ruan Y."/>
            <person name="Salzberg S.L."/>
            <person name="Sandelin A."/>
            <person name="Schneider C."/>
            <person name="Schoenbach C."/>
            <person name="Sekiguchi K."/>
            <person name="Semple C.A."/>
            <person name="Seno S."/>
            <person name="Sessa L."/>
            <person name="Sheng Y."/>
            <person name="Shibata Y."/>
            <person name="Shimada H."/>
            <person name="Shimada K."/>
            <person name="Silva D."/>
            <person name="Sinclair B."/>
            <person name="Sperling S."/>
            <person name="Stupka E."/>
            <person name="Sugiura K."/>
            <person name="Sultana R."/>
            <person name="Takenaka Y."/>
            <person name="Taki K."/>
            <person name="Tammoja K."/>
            <person name="Tan S.L."/>
            <person name="Tang S."/>
            <person name="Taylor M.S."/>
            <person name="Tegner J."/>
            <person name="Teichmann S.A."/>
            <person name="Ueda H.R."/>
            <person name="van Nimwegen E."/>
            <person name="Verardo R."/>
            <person name="Wei C.L."/>
            <person name="Yagi K."/>
            <person name="Yamanishi H."/>
            <person name="Zabarovsky E."/>
            <person name="Zhu S."/>
            <person name="Zimmer A."/>
            <person name="Hide W."/>
            <person name="Bult C."/>
            <person name="Grimmond S.M."/>
            <person name="Teasdale R.D."/>
            <person name="Liu E.T."/>
            <person name="Brusic V."/>
            <person name="Quackenbush J."/>
            <person name="Wahlestedt C."/>
            <person name="Mattick J.S."/>
            <person name="Hume D.A."/>
            <person name="Kai C."/>
            <person name="Sasaki D."/>
            <person name="Tomaru Y."/>
            <person name="Fukuda S."/>
            <person name="Kanamori-Katayama M."/>
            <person name="Suzuki M."/>
            <person name="Aoki J."/>
            <person name="Arakawa T."/>
            <person name="Iida J."/>
            <person name="Imamura K."/>
            <person name="Itoh M."/>
            <person name="Kato T."/>
            <person name="Kawaji H."/>
            <person name="Kawagashira N."/>
            <person name="Kawashima T."/>
            <person name="Kojima M."/>
            <person name="Kondo S."/>
            <person name="Konno H."/>
            <person name="Nakano K."/>
            <person name="Ninomiya N."/>
            <person name="Nishio T."/>
            <person name="Okada M."/>
            <person name="Plessy C."/>
            <person name="Shibata K."/>
            <person name="Shiraki T."/>
            <person name="Suzuki S."/>
            <person name="Tagami M."/>
            <person name="Waki K."/>
            <person name="Watahiki A."/>
            <person name="Okamura-Oho Y."/>
            <person name="Suzuki H."/>
            <person name="Kawai J."/>
            <person name="Hayashizaki Y."/>
        </authorList>
    </citation>
    <scope>NUCLEOTIDE SEQUENCE [LARGE SCALE MRNA]</scope>
    <source>
        <strain>C57BL/6J</strain>
        <strain>NOD</strain>
        <tissue>Eye</tissue>
        <tissue>Heart</tissue>
        <tissue>Thymus</tissue>
    </source>
</reference>
<reference key="3">
    <citation type="journal article" date="2009" name="Mol. Cell. Proteomics">
        <title>Large scale localization of protein phosphorylation by use of electron capture dissociation mass spectrometry.</title>
        <authorList>
            <person name="Sweet S.M."/>
            <person name="Bailey C.M."/>
            <person name="Cunningham D.L."/>
            <person name="Heath J.K."/>
            <person name="Cooper H.J."/>
        </authorList>
    </citation>
    <scope>IDENTIFICATION BY MASS SPECTROMETRY [LARGE SCALE ANALYSIS]</scope>
    <source>
        <tissue>Embryonic fibroblast</tissue>
    </source>
</reference>
<reference key="4">
    <citation type="journal article" date="2010" name="Cell">
        <title>A tissue-specific atlas of mouse protein phosphorylation and expression.</title>
        <authorList>
            <person name="Huttlin E.L."/>
            <person name="Jedrychowski M.P."/>
            <person name="Elias J.E."/>
            <person name="Goswami T."/>
            <person name="Rad R."/>
            <person name="Beausoleil S.A."/>
            <person name="Villen J."/>
            <person name="Haas W."/>
            <person name="Sowa M.E."/>
            <person name="Gygi S.P."/>
        </authorList>
    </citation>
    <scope>PHOSPHORYLATION [LARGE SCALE ANALYSIS] AT THR-89; SER-91; SER-95 AND SER-98</scope>
    <scope>IDENTIFICATION BY MASS SPECTROMETRY [LARGE SCALE ANALYSIS]</scope>
    <source>
        <tissue>Brain</tissue>
        <tissue>Brown adipose tissue</tissue>
        <tissue>Heart</tissue>
        <tissue>Kidney</tissue>
        <tissue>Liver</tissue>
        <tissue>Lung</tissue>
        <tissue>Pancreas</tissue>
        <tissue>Spleen</tissue>
        <tissue>Testis</tissue>
    </source>
</reference>
<reference key="5">
    <citation type="journal article" date="2012" name="Mol. Biol. Cell">
        <title>BICD2, dynactin, and LIS1 cooperate in regulating dynein recruitment to cellular structures.</title>
        <authorList>
            <person name="Splinter D."/>
            <person name="Razafsky D.S."/>
            <person name="Schlager M.A."/>
            <person name="Serra-Marques A."/>
            <person name="Grigoriev I."/>
            <person name="Demmers J."/>
            <person name="Keijzer N."/>
            <person name="Jiang K."/>
            <person name="Poser I."/>
            <person name="Hyman A.A."/>
            <person name="Hoogenraad C.C."/>
            <person name="King S.J."/>
            <person name="Akhmanova A."/>
        </authorList>
    </citation>
    <scope>INTERACTION WITH BICD2</scope>
</reference>
<reference key="6">
    <citation type="journal article" date="2016" name="Biochem. J.">
        <title>Inositol hexakisphosphate kinase 1 (IP6K1) activity is required for cytoplasmic dynein-driven transport.</title>
        <authorList>
            <person name="Chanduri M."/>
            <person name="Rai A."/>
            <person name="Malla A.B."/>
            <person name="Wu M."/>
            <person name="Fiedler D."/>
            <person name="Mallik R."/>
            <person name="Bhandari R."/>
        </authorList>
    </citation>
    <scope>FUNCTION</scope>
    <scope>INTERACTION WITH DCTN1</scope>
    <scope>PHOSPHORYLATION AT SER-51 PYROPHOSPHORYLATION AT SER-51</scope>
    <scope>MUTAGENESIS OF SER-51</scope>
</reference>
<reference key="7">
    <citation type="journal article" date="2017" name="Development">
        <title>SPEF2 functions in microtubule-mediated transport in elongating spermatids to ensure proper male germ cell differentiation.</title>
        <authorList>
            <person name="Lehti M.S."/>
            <person name="Zhang F.P."/>
            <person name="Kotaja N."/>
            <person name="Sironen A."/>
        </authorList>
    </citation>
    <scope>INTERACTION WITH SPEF2</scope>
    <scope>SUBCELLULAR LOCATION</scope>
    <scope>IDENTIFICATION BY MASS SPECTROMETRY</scope>
</reference>
<reference key="8">
    <citation type="journal article" date="2021" name="Development">
        <title>CFAP61 is required for sperm flagellum formation and male fertility in human and mouse.</title>
        <authorList>
            <person name="Liu S."/>
            <person name="Zhang J."/>
            <person name="Kherraf Z.E."/>
            <person name="Sun S."/>
            <person name="Zhang X."/>
            <person name="Cazin C."/>
            <person name="Coutton C."/>
            <person name="Zouari R."/>
            <person name="Zhao S."/>
            <person name="Hu F."/>
            <person name="Fourati Ben Mustapha S."/>
            <person name="Arnoult C."/>
            <person name="Ray P.F."/>
            <person name="Liu M."/>
        </authorList>
    </citation>
    <scope>INTERACTION WITH CFAP61</scope>
</reference>
<keyword id="KW-0007">Acetylation</keyword>
<keyword id="KW-0963">Cytoplasm</keyword>
<keyword id="KW-0206">Cytoskeleton</keyword>
<keyword id="KW-0243">Dynein</keyword>
<keyword id="KW-0493">Microtubule</keyword>
<keyword id="KW-0505">Motor protein</keyword>
<keyword id="KW-0597">Phosphoprotein</keyword>
<keyword id="KW-1185">Reference proteome</keyword>
<keyword id="KW-0677">Repeat</keyword>
<keyword id="KW-0813">Transport</keyword>
<keyword id="KW-0853">WD repeat</keyword>
<sequence length="612" mass="68394">MSDKSDLKAELERKKQRLAQIREEKKRKEEERKKKETDQKKEAAVSVQEESDLEKKRREAEALLQSMGLTTDSPIVPPPMSPSSKSVSTPSEAGSQDSGDGAVGSRRGPIKLGMAKITQVDFPPREIVTYTKETQTPVTAQPKEDEEEEDDVATPKPPVEPEEEKTLKKDEENDSKAPPHELTEEEKQQILHSEEFLSFFDHSTRIVERALSEQINIFFDYSGRDLEDKEGEIQAGAKLSLNRQFFDERWSKHRVVSCLDWSSQYPELLVASYNNNEEAPHEPDGVALVWNMKYKKTTPEYVFHCQSAVMSATFAKFHPNLVVGGTYSGQIVLWDNRSNKRTPVQRTPLSAAAHTHPVYCVNVVGTQNAHNLISISTDGKICSWSLDMLSHPQDSMELVHKQSKAVAVTSMSFPVGDVNNFVVGSEEGSVYTACRHGSKAGISEMFEGHQGPITGIHCHAAVGAVDFSHLFVTSSFDWTVKLWTTKNNKPLYSFEDNSDYVYDVMWSPTHPALFACVDGMGRLDLWNLNNDTEVPTASISVEGNPALNRVRWTHSGREIAVGDSEGQIVIYDVGEQIAVPRNDEWARFGRTLAEINANRADAEEEAATRIPA</sequence>
<accession>O88487</accession>
<accession>Q3TGH7</accession>
<feature type="initiator methionine" description="Removed" evidence="1">
    <location>
        <position position="1"/>
    </location>
</feature>
<feature type="chain" id="PRO_0000114656" description="Cytoplasmic dynein 1 intermediate chain 2">
    <location>
        <begin position="2"/>
        <end position="612"/>
    </location>
</feature>
<feature type="repeat" description="WD 1">
    <location>
        <begin position="251"/>
        <end position="300"/>
    </location>
</feature>
<feature type="repeat" description="WD 2">
    <location>
        <begin position="304"/>
        <end position="344"/>
    </location>
</feature>
<feature type="repeat" description="WD 3">
    <location>
        <begin position="353"/>
        <end position="394"/>
    </location>
</feature>
<feature type="repeat" description="WD 4">
    <location>
        <begin position="403"/>
        <end position="443"/>
    </location>
</feature>
<feature type="repeat" description="WD 5">
    <location>
        <begin position="448"/>
        <end position="493"/>
    </location>
</feature>
<feature type="repeat" description="WD 6">
    <location>
        <begin position="496"/>
        <end position="536"/>
    </location>
</feature>
<feature type="repeat" description="WD 7">
    <location>
        <begin position="542"/>
        <end position="581"/>
    </location>
</feature>
<feature type="region of interest" description="Disordered" evidence="3">
    <location>
        <begin position="1"/>
        <end position="188"/>
    </location>
</feature>
<feature type="compositionally biased region" description="Basic and acidic residues" evidence="3">
    <location>
        <begin position="1"/>
        <end position="13"/>
    </location>
</feature>
<feature type="compositionally biased region" description="Basic and acidic residues" evidence="3">
    <location>
        <begin position="20"/>
        <end position="43"/>
    </location>
</feature>
<feature type="compositionally biased region" description="Low complexity" evidence="3">
    <location>
        <begin position="82"/>
        <end position="91"/>
    </location>
</feature>
<feature type="compositionally biased region" description="Basic and acidic residues" evidence="3">
    <location>
        <begin position="164"/>
        <end position="188"/>
    </location>
</feature>
<feature type="modified residue" description="N-acetylserine" evidence="1">
    <location>
        <position position="2"/>
    </location>
</feature>
<feature type="modified residue" description="Diphosphoserine" evidence="5">
    <location>
        <position position="51"/>
    </location>
</feature>
<feature type="modified residue" description="Phosphoserine" evidence="5">
    <location>
        <position position="51"/>
    </location>
</feature>
<feature type="modified residue" description="Phosphoserine" evidence="2">
    <location>
        <position position="84"/>
    </location>
</feature>
<feature type="modified residue" description="Phosphothreonine" evidence="9">
    <location>
        <position position="89"/>
    </location>
</feature>
<feature type="modified residue" description="Phosphoserine" evidence="9">
    <location>
        <position position="91"/>
    </location>
</feature>
<feature type="modified residue" description="Phosphoserine" evidence="9">
    <location>
        <position position="95"/>
    </location>
</feature>
<feature type="modified residue" description="Phosphoserine" evidence="9">
    <location>
        <position position="98"/>
    </location>
</feature>
<feature type="mutagenesis site" description="Abolished both phosphorylation and pyrophosphorylation." evidence="5">
    <original>S</original>
    <variation>A</variation>
    <location>
        <position position="51"/>
    </location>
</feature>
<name>DC1I2_MOUSE</name>
<proteinExistence type="evidence at protein level"/>
<evidence type="ECO:0000250" key="1">
    <source>
        <dbReference type="UniProtKB" id="Q13409"/>
    </source>
</evidence>
<evidence type="ECO:0000250" key="2">
    <source>
        <dbReference type="UniProtKB" id="Q62871"/>
    </source>
</evidence>
<evidence type="ECO:0000256" key="3">
    <source>
        <dbReference type="SAM" id="MobiDB-lite"/>
    </source>
</evidence>
<evidence type="ECO:0000269" key="4">
    <source>
    </source>
</evidence>
<evidence type="ECO:0000269" key="5">
    <source>
    </source>
</evidence>
<evidence type="ECO:0000269" key="6">
    <source>
    </source>
</evidence>
<evidence type="ECO:0000269" key="7">
    <source>
    </source>
</evidence>
<evidence type="ECO:0000305" key="8"/>
<evidence type="ECO:0007744" key="9">
    <source>
    </source>
</evidence>